<protein>
    <recommendedName>
        <fullName evidence="1">UPF0276 protein PA3283</fullName>
    </recommendedName>
</protein>
<sequence>MQREFVSGAGLGLRRALLEPLGAGDGVRVDFLEVAPENWIGIGGRLGRQFRELTERLPFLCHGLSLNLGGYAPLDMSLLRAIKGFIEQHDIRAYSEHLSACADDGQLYDLMPLPFSDESVRRVAERVRVVQDVLERPLIVENVSAYARLPGELEEVDFVRAVLEEADCQLLLDVNNVYVNACNFGFDAHAYIAAMPSRRIAYLHMAGHDEQGASLKIDTHGAPVCDPVWELLAHAYACHGERPTLLERDFNLPPLSELYAETDRIRELQRRSGEAQLRSLGYGT</sequence>
<accession>Q9HYW0</accession>
<comment type="similarity">
    <text evidence="1">Belongs to the UPF0276 family.</text>
</comment>
<evidence type="ECO:0000255" key="1">
    <source>
        <dbReference type="HAMAP-Rule" id="MF_00697"/>
    </source>
</evidence>
<reference key="1">
    <citation type="journal article" date="2000" name="Nature">
        <title>Complete genome sequence of Pseudomonas aeruginosa PAO1, an opportunistic pathogen.</title>
        <authorList>
            <person name="Stover C.K."/>
            <person name="Pham X.-Q.T."/>
            <person name="Erwin A.L."/>
            <person name="Mizoguchi S.D."/>
            <person name="Warrener P."/>
            <person name="Hickey M.J."/>
            <person name="Brinkman F.S.L."/>
            <person name="Hufnagle W.O."/>
            <person name="Kowalik D.J."/>
            <person name="Lagrou M."/>
            <person name="Garber R.L."/>
            <person name="Goltry L."/>
            <person name="Tolentino E."/>
            <person name="Westbrock-Wadman S."/>
            <person name="Yuan Y."/>
            <person name="Brody L.L."/>
            <person name="Coulter S.N."/>
            <person name="Folger K.R."/>
            <person name="Kas A."/>
            <person name="Larbig K."/>
            <person name="Lim R.M."/>
            <person name="Smith K.A."/>
            <person name="Spencer D.H."/>
            <person name="Wong G.K.-S."/>
            <person name="Wu Z."/>
            <person name="Paulsen I.T."/>
            <person name="Reizer J."/>
            <person name="Saier M.H. Jr."/>
            <person name="Hancock R.E.W."/>
            <person name="Lory S."/>
            <person name="Olson M.V."/>
        </authorList>
    </citation>
    <scope>NUCLEOTIDE SEQUENCE [LARGE SCALE GENOMIC DNA]</scope>
    <source>
        <strain>ATCC 15692 / DSM 22644 / CIP 104116 / JCM 14847 / LMG 12228 / 1C / PRS 101 / PAO1</strain>
    </source>
</reference>
<dbReference type="EMBL" id="AE004091">
    <property type="protein sequence ID" value="AAG06671.1"/>
    <property type="molecule type" value="Genomic_DNA"/>
</dbReference>
<dbReference type="PIR" id="B83236">
    <property type="entry name" value="B83236"/>
</dbReference>
<dbReference type="RefSeq" id="NP_251973.1">
    <property type="nucleotide sequence ID" value="NC_002516.2"/>
</dbReference>
<dbReference type="RefSeq" id="WP_003114074.1">
    <property type="nucleotide sequence ID" value="NZ_QZGE01000019.1"/>
</dbReference>
<dbReference type="SMR" id="Q9HYW0"/>
<dbReference type="STRING" id="208964.PA3283"/>
<dbReference type="PaxDb" id="208964-PA3283"/>
<dbReference type="GeneID" id="882446"/>
<dbReference type="KEGG" id="pae:PA3283"/>
<dbReference type="PATRIC" id="fig|208964.12.peg.3433"/>
<dbReference type="PseudoCAP" id="PA3283"/>
<dbReference type="HOGENOM" id="CLU_064263_0_0_6"/>
<dbReference type="InParanoid" id="Q9HYW0"/>
<dbReference type="OrthoDB" id="9763101at2"/>
<dbReference type="PhylomeDB" id="Q9HYW0"/>
<dbReference type="BioCyc" id="PAER208964:G1FZ6-3344-MONOMER"/>
<dbReference type="Proteomes" id="UP000002438">
    <property type="component" value="Chromosome"/>
</dbReference>
<dbReference type="Gene3D" id="3.20.20.150">
    <property type="entry name" value="Divalent-metal-dependent TIM barrel enzymes"/>
    <property type="match status" value="1"/>
</dbReference>
<dbReference type="HAMAP" id="MF_00697">
    <property type="entry name" value="UPF0276"/>
    <property type="match status" value="1"/>
</dbReference>
<dbReference type="InterPro" id="IPR007801">
    <property type="entry name" value="MbnB/TglH/ChrH"/>
</dbReference>
<dbReference type="InterPro" id="IPR036237">
    <property type="entry name" value="Xyl_isomerase-like_sf"/>
</dbReference>
<dbReference type="NCBIfam" id="NF003818">
    <property type="entry name" value="PRK05409.1"/>
    <property type="match status" value="1"/>
</dbReference>
<dbReference type="PANTHER" id="PTHR42194">
    <property type="entry name" value="UPF0276 PROTEIN HI_1600"/>
    <property type="match status" value="1"/>
</dbReference>
<dbReference type="PANTHER" id="PTHR42194:SF1">
    <property type="entry name" value="UPF0276 PROTEIN HI_1600"/>
    <property type="match status" value="1"/>
</dbReference>
<dbReference type="Pfam" id="PF05114">
    <property type="entry name" value="MbnB_TglH_ChrH"/>
    <property type="match status" value="1"/>
</dbReference>
<dbReference type="SUPFAM" id="SSF51658">
    <property type="entry name" value="Xylose isomerase-like"/>
    <property type="match status" value="1"/>
</dbReference>
<feature type="chain" id="PRO_0000192702" description="UPF0276 protein PA3283">
    <location>
        <begin position="1"/>
        <end position="284"/>
    </location>
</feature>
<proteinExistence type="inferred from homology"/>
<organism>
    <name type="scientific">Pseudomonas aeruginosa (strain ATCC 15692 / DSM 22644 / CIP 104116 / JCM 14847 / LMG 12228 / 1C / PRS 101 / PAO1)</name>
    <dbReference type="NCBI Taxonomy" id="208964"/>
    <lineage>
        <taxon>Bacteria</taxon>
        <taxon>Pseudomonadati</taxon>
        <taxon>Pseudomonadota</taxon>
        <taxon>Gammaproteobacteria</taxon>
        <taxon>Pseudomonadales</taxon>
        <taxon>Pseudomonadaceae</taxon>
        <taxon>Pseudomonas</taxon>
    </lineage>
</organism>
<gene>
    <name type="ordered locus">PA3283</name>
</gene>
<name>Y3283_PSEAE</name>
<keyword id="KW-1185">Reference proteome</keyword>